<reference key="1">
    <citation type="journal article" date="2005" name="Genome Res.">
        <title>Comparative and functional genomic analyses of the pathogenicity of phytopathogen Xanthomonas campestris pv. campestris.</title>
        <authorList>
            <person name="Qian W."/>
            <person name="Jia Y."/>
            <person name="Ren S.-X."/>
            <person name="He Y.-Q."/>
            <person name="Feng J.-X."/>
            <person name="Lu L.-F."/>
            <person name="Sun Q."/>
            <person name="Ying G."/>
            <person name="Tang D.-J."/>
            <person name="Tang H."/>
            <person name="Wu W."/>
            <person name="Hao P."/>
            <person name="Wang L."/>
            <person name="Jiang B.-L."/>
            <person name="Zeng S."/>
            <person name="Gu W.-Y."/>
            <person name="Lu G."/>
            <person name="Rong L."/>
            <person name="Tian Y."/>
            <person name="Yao Z."/>
            <person name="Fu G."/>
            <person name="Chen B."/>
            <person name="Fang R."/>
            <person name="Qiang B."/>
            <person name="Chen Z."/>
            <person name="Zhao G.-P."/>
            <person name="Tang J.-L."/>
            <person name="He C."/>
        </authorList>
    </citation>
    <scope>NUCLEOTIDE SEQUENCE [LARGE SCALE GENOMIC DNA]</scope>
    <source>
        <strain>8004</strain>
    </source>
</reference>
<protein>
    <recommendedName>
        <fullName evidence="1">ATP phosphoribosyltransferase</fullName>
        <shortName evidence="1">ATP-PRT</shortName>
        <shortName evidence="1">ATP-PRTase</shortName>
        <ecNumber evidence="1">2.4.2.17</ecNumber>
    </recommendedName>
</protein>
<feature type="chain" id="PRO_1000004515" description="ATP phosphoribosyltransferase">
    <location>
        <begin position="1"/>
        <end position="304"/>
    </location>
</feature>
<accession>Q4UU39</accession>
<evidence type="ECO:0000255" key="1">
    <source>
        <dbReference type="HAMAP-Rule" id="MF_00079"/>
    </source>
</evidence>
<sequence length="304" mass="32734">MSASTAAPARDRLRIAIQKNGRLAEPARSLLAACGLSWRQSRDKLFCYGESLPVDLLLVRDDDIPGLIADGVCDLGIVGQNELDEQASARRRAGLPAAYHAVRGVGFGQCRLMLAVPEEWDWQGVAQLAGKRIATSYPAILADWLERQGIDASVVELSGSVEIAPRLGTADLICDLVSSGATLAANQLKPVELVMESEAVLAGAVREPADARAALLAMLLRRMDGVLKLRDSKLLMFRAEQGNVDALRRLLPDADPLVQLPDDGNGALRLQTMCHGAVTWQRLEELERAGAQGLMVLTVERSLA</sequence>
<comment type="function">
    <text evidence="1">Catalyzes the condensation of ATP and 5-phosphoribose 1-diphosphate to form N'-(5'-phosphoribosyl)-ATP (PR-ATP). Has a crucial role in the pathway because the rate of histidine biosynthesis seems to be controlled primarily by regulation of HisG enzymatic activity.</text>
</comment>
<comment type="catalytic activity">
    <reaction evidence="1">
        <text>1-(5-phospho-beta-D-ribosyl)-ATP + diphosphate = 5-phospho-alpha-D-ribose 1-diphosphate + ATP</text>
        <dbReference type="Rhea" id="RHEA:18473"/>
        <dbReference type="ChEBI" id="CHEBI:30616"/>
        <dbReference type="ChEBI" id="CHEBI:33019"/>
        <dbReference type="ChEBI" id="CHEBI:58017"/>
        <dbReference type="ChEBI" id="CHEBI:73183"/>
        <dbReference type="EC" id="2.4.2.17"/>
    </reaction>
</comment>
<comment type="cofactor">
    <cofactor evidence="1">
        <name>Mg(2+)</name>
        <dbReference type="ChEBI" id="CHEBI:18420"/>
    </cofactor>
</comment>
<comment type="activity regulation">
    <text evidence="1">Feedback inhibited by histidine.</text>
</comment>
<comment type="pathway">
    <text evidence="1">Amino-acid biosynthesis; L-histidine biosynthesis; L-histidine from 5-phospho-alpha-D-ribose 1-diphosphate: step 1/9.</text>
</comment>
<comment type="subcellular location">
    <subcellularLocation>
        <location evidence="1">Cytoplasm</location>
    </subcellularLocation>
</comment>
<comment type="similarity">
    <text evidence="1">Belongs to the ATP phosphoribosyltransferase family. Long subfamily.</text>
</comment>
<gene>
    <name evidence="1" type="primary">hisG</name>
    <name type="ordered locus">XC_2381</name>
</gene>
<dbReference type="EC" id="2.4.2.17" evidence="1"/>
<dbReference type="EMBL" id="CP000050">
    <property type="protein sequence ID" value="AAY49434.1"/>
    <property type="molecule type" value="Genomic_DNA"/>
</dbReference>
<dbReference type="RefSeq" id="WP_011269813.1">
    <property type="nucleotide sequence ID" value="NZ_CP155948.1"/>
</dbReference>
<dbReference type="SMR" id="Q4UU39"/>
<dbReference type="GeneID" id="58013644"/>
<dbReference type="KEGG" id="xcb:XC_2381"/>
<dbReference type="HOGENOM" id="CLU_038115_1_0_6"/>
<dbReference type="UniPathway" id="UPA00031">
    <property type="reaction ID" value="UER00006"/>
</dbReference>
<dbReference type="Proteomes" id="UP000000420">
    <property type="component" value="Chromosome"/>
</dbReference>
<dbReference type="GO" id="GO:0005737">
    <property type="term" value="C:cytoplasm"/>
    <property type="evidence" value="ECO:0007669"/>
    <property type="project" value="UniProtKB-SubCell"/>
</dbReference>
<dbReference type="GO" id="GO:0005524">
    <property type="term" value="F:ATP binding"/>
    <property type="evidence" value="ECO:0007669"/>
    <property type="project" value="UniProtKB-KW"/>
</dbReference>
<dbReference type="GO" id="GO:0003879">
    <property type="term" value="F:ATP phosphoribosyltransferase activity"/>
    <property type="evidence" value="ECO:0007669"/>
    <property type="project" value="UniProtKB-UniRule"/>
</dbReference>
<dbReference type="GO" id="GO:0000287">
    <property type="term" value="F:magnesium ion binding"/>
    <property type="evidence" value="ECO:0007669"/>
    <property type="project" value="UniProtKB-UniRule"/>
</dbReference>
<dbReference type="GO" id="GO:0000105">
    <property type="term" value="P:L-histidine biosynthetic process"/>
    <property type="evidence" value="ECO:0007669"/>
    <property type="project" value="UniProtKB-UniRule"/>
</dbReference>
<dbReference type="FunFam" id="3.40.190.10:FF:000008">
    <property type="entry name" value="ATP phosphoribosyltransferase"/>
    <property type="match status" value="1"/>
</dbReference>
<dbReference type="Gene3D" id="3.30.70.120">
    <property type="match status" value="1"/>
</dbReference>
<dbReference type="Gene3D" id="3.40.190.10">
    <property type="entry name" value="Periplasmic binding protein-like II"/>
    <property type="match status" value="2"/>
</dbReference>
<dbReference type="HAMAP" id="MF_00079">
    <property type="entry name" value="HisG_Long"/>
    <property type="match status" value="1"/>
</dbReference>
<dbReference type="InterPro" id="IPR020621">
    <property type="entry name" value="ATP-PRT_HisG_long"/>
</dbReference>
<dbReference type="InterPro" id="IPR013820">
    <property type="entry name" value="ATP_PRibTrfase_cat"/>
</dbReference>
<dbReference type="InterPro" id="IPR018198">
    <property type="entry name" value="ATP_PRibTrfase_CS"/>
</dbReference>
<dbReference type="InterPro" id="IPR001348">
    <property type="entry name" value="ATP_PRibTrfase_HisG"/>
</dbReference>
<dbReference type="InterPro" id="IPR013115">
    <property type="entry name" value="HisG_C"/>
</dbReference>
<dbReference type="InterPro" id="IPR015867">
    <property type="entry name" value="N-reg_PII/ATP_PRibTrfase_C"/>
</dbReference>
<dbReference type="NCBIfam" id="TIGR00070">
    <property type="entry name" value="hisG"/>
    <property type="match status" value="1"/>
</dbReference>
<dbReference type="NCBIfam" id="TIGR03455">
    <property type="entry name" value="HisG_C-term"/>
    <property type="match status" value="1"/>
</dbReference>
<dbReference type="PANTHER" id="PTHR21403:SF8">
    <property type="entry name" value="ATP PHOSPHORIBOSYLTRANSFERASE"/>
    <property type="match status" value="1"/>
</dbReference>
<dbReference type="PANTHER" id="PTHR21403">
    <property type="entry name" value="ATP PHOSPHORIBOSYLTRANSFERASE ATP-PRTASE"/>
    <property type="match status" value="1"/>
</dbReference>
<dbReference type="Pfam" id="PF01634">
    <property type="entry name" value="HisG"/>
    <property type="match status" value="1"/>
</dbReference>
<dbReference type="SUPFAM" id="SSF53850">
    <property type="entry name" value="Periplasmic binding protein-like II"/>
    <property type="match status" value="1"/>
</dbReference>
<dbReference type="PROSITE" id="PS01316">
    <property type="entry name" value="ATP_P_PHORIBOSYLTR"/>
    <property type="match status" value="1"/>
</dbReference>
<organism>
    <name type="scientific">Xanthomonas campestris pv. campestris (strain 8004)</name>
    <dbReference type="NCBI Taxonomy" id="314565"/>
    <lineage>
        <taxon>Bacteria</taxon>
        <taxon>Pseudomonadati</taxon>
        <taxon>Pseudomonadota</taxon>
        <taxon>Gammaproteobacteria</taxon>
        <taxon>Lysobacterales</taxon>
        <taxon>Lysobacteraceae</taxon>
        <taxon>Xanthomonas</taxon>
    </lineage>
</organism>
<keyword id="KW-0028">Amino-acid biosynthesis</keyword>
<keyword id="KW-0067">ATP-binding</keyword>
<keyword id="KW-0963">Cytoplasm</keyword>
<keyword id="KW-0328">Glycosyltransferase</keyword>
<keyword id="KW-0368">Histidine biosynthesis</keyword>
<keyword id="KW-0460">Magnesium</keyword>
<keyword id="KW-0479">Metal-binding</keyword>
<keyword id="KW-0547">Nucleotide-binding</keyword>
<keyword id="KW-0808">Transferase</keyword>
<name>HIS1_XANC8</name>
<proteinExistence type="inferred from homology"/>